<proteinExistence type="evidence at protein level"/>
<comment type="function">
    <text evidence="2 4 6 7 8 10 11 12 13">Part of the processive rRNA transcription and antitermination complex (rrnTAC). The complex forms an RNA-chaperone ring around the RNA exit tunnel of RNA polymerase (RNAP). It supports rapid transcription and antitermination of rRNA operons, cotranscriptional rRNA folding, and annealing of distal rRNA regions to allow correct ribosome biogenesis (PubMed:32871103). Involved in transcription antitermination. Required for transcription of ribosomal RNA (rRNA) genes. Binds specifically to the boxA antiterminator sequence of the ribosomal RNA (rrn) operons (PubMed:11884128, PubMed:14973028, PubMed:15716433, PubMed:16109710, PubMed:7045592, PubMed:7678781). The affinity of NusB for the boxA RNA sequence is significantly increased in the presence of the ribosomal protein S10 (PubMed:11884128, PubMed:16109710). NusB may serve as a loading factor that ensures efficient entry of S10 into the transcription complexes (PubMed:19111659). It also modulates the rrn boxA-mediated transcription elongation rates (PubMed:10383769).</text>
</comment>
<comment type="subunit">
    <text evidence="3 4 8 9 10 11">Monomer in solution (PubMed:10881193, PubMed:16109710). Forms a heterodimer with the ribosomal protein S10 (PubMed:11884128, PubMed:16109710, PubMed:1731086, PubMed:19111659). The rRNA transcription and antitermination complex (rrnTAC) consists of RNAP, NusA, NusB, NusE (rpsJ), NusG, SubB, ribosomal protein S4, DNA and precursor rRNA; S4 is more flexible than other subunits (PubMed:32871103).</text>
</comment>
<comment type="interaction">
    <interactant intactId="EBI-555387">
        <id>P0A780</id>
    </interactant>
    <interactant intactId="EBI-544602">
        <id>P0A7R5</id>
        <label>rpsJ</label>
    </interactant>
    <organismsDiffer>false</organismsDiffer>
    <experiments>6</experiments>
</comment>
<comment type="domain">
    <text evidence="14">The N-terminal region functions as an arginine-rich RNA-binding motif (ARM).</text>
</comment>
<comment type="disruption phenotype">
    <text evidence="5">Inactivation of the gene causes cold-sensitive cell growth.</text>
</comment>
<comment type="similarity">
    <text evidence="1 19">Belongs to the NusB family.</text>
</comment>
<gene>
    <name evidence="1 17" type="primary">nusB</name>
    <name evidence="16" type="synonym">groNB</name>
    <name evidence="15" type="synonym">ssyB</name>
    <name type="ordered locus">b0416</name>
    <name type="ordered locus">JW0406</name>
</gene>
<name>NUSB_ECOLI</name>
<accession>P0A780</accession>
<accession>P04381</accession>
<accession>Q2MC10</accession>
<protein>
    <recommendedName>
        <fullName evidence="1 19">Transcription antitermination protein NusB</fullName>
    </recommendedName>
    <alternativeName>
        <fullName evidence="1 18">Antitermination factor NusB</fullName>
    </alternativeName>
    <alternativeName>
        <fullName evidence="19">N utilization substance protein B</fullName>
    </alternativeName>
</protein>
<keyword id="KW-0002">3D-structure</keyword>
<keyword id="KW-0903">Direct protein sequencing</keyword>
<keyword id="KW-1185">Reference proteome</keyword>
<keyword id="KW-0690">Ribosome biogenesis</keyword>
<keyword id="KW-0694">RNA-binding</keyword>
<keyword id="KW-0804">Transcription</keyword>
<keyword id="KW-0889">Transcription antitermination</keyword>
<keyword id="KW-0805">Transcription regulation</keyword>
<organism>
    <name type="scientific">Escherichia coli (strain K12)</name>
    <dbReference type="NCBI Taxonomy" id="83333"/>
    <lineage>
        <taxon>Bacteria</taxon>
        <taxon>Pseudomonadati</taxon>
        <taxon>Pseudomonadota</taxon>
        <taxon>Gammaproteobacteria</taxon>
        <taxon>Enterobacterales</taxon>
        <taxon>Enterobacteriaceae</taxon>
        <taxon>Escherichia</taxon>
    </lineage>
</organism>
<dbReference type="EMBL" id="X00681">
    <property type="protein sequence ID" value="CAA25289.1"/>
    <property type="molecule type" value="Genomic_DNA"/>
</dbReference>
<dbReference type="EMBL" id="X64395">
    <property type="protein sequence ID" value="CAA45737.1"/>
    <property type="molecule type" value="Genomic_DNA"/>
</dbReference>
<dbReference type="EMBL" id="M26839">
    <property type="protein sequence ID" value="AAA24228.1"/>
    <property type="molecule type" value="Genomic_DNA"/>
</dbReference>
<dbReference type="EMBL" id="U82664">
    <property type="protein sequence ID" value="AAB40172.1"/>
    <property type="molecule type" value="Genomic_DNA"/>
</dbReference>
<dbReference type="EMBL" id="U00096">
    <property type="protein sequence ID" value="AAC73519.1"/>
    <property type="molecule type" value="Genomic_DNA"/>
</dbReference>
<dbReference type="EMBL" id="AP009048">
    <property type="protein sequence ID" value="BAE76196.1"/>
    <property type="molecule type" value="Genomic_DNA"/>
</dbReference>
<dbReference type="PIR" id="I51822">
    <property type="entry name" value="FJECB"/>
</dbReference>
<dbReference type="RefSeq" id="NP_414950.1">
    <property type="nucleotide sequence ID" value="NC_000913.3"/>
</dbReference>
<dbReference type="RefSeq" id="WP_000801125.1">
    <property type="nucleotide sequence ID" value="NZ_STEB01000007.1"/>
</dbReference>
<dbReference type="PDB" id="1EY1">
    <property type="method" value="NMR"/>
    <property type="chains" value="A=1-139"/>
</dbReference>
<dbReference type="PDB" id="3D3B">
    <property type="method" value="X-ray"/>
    <property type="resolution" value="1.30 A"/>
    <property type="chains" value="A=1-139"/>
</dbReference>
<dbReference type="PDB" id="3D3C">
    <property type="method" value="X-ray"/>
    <property type="resolution" value="2.60 A"/>
    <property type="chains" value="A/B/C=1-139"/>
</dbReference>
<dbReference type="PDB" id="3IMQ">
    <property type="method" value="X-ray"/>
    <property type="resolution" value="2.50 A"/>
    <property type="chains" value="A/B/C=3-139"/>
</dbReference>
<dbReference type="PDB" id="5LM7">
    <property type="method" value="X-ray"/>
    <property type="resolution" value="3.35 A"/>
    <property type="chains" value="B/D=1-139"/>
</dbReference>
<dbReference type="PDB" id="5MS0">
    <property type="method" value="EM"/>
    <property type="resolution" value="9.80 A"/>
    <property type="chains" value="L=1-139"/>
</dbReference>
<dbReference type="PDB" id="6GOV">
    <property type="method" value="EM"/>
    <property type="resolution" value="3.70 A"/>
    <property type="chains" value="B=1-139"/>
</dbReference>
<dbReference type="PDB" id="6TQN">
    <property type="method" value="EM"/>
    <property type="resolution" value="3.80 A"/>
    <property type="chains" value="B=1-139"/>
</dbReference>
<dbReference type="PDB" id="6TQO">
    <property type="method" value="EM"/>
    <property type="resolution" value="4.00 A"/>
    <property type="chains" value="B=1-139"/>
</dbReference>
<dbReference type="PDBsum" id="1EY1"/>
<dbReference type="PDBsum" id="3D3B"/>
<dbReference type="PDBsum" id="3D3C"/>
<dbReference type="PDBsum" id="3IMQ"/>
<dbReference type="PDBsum" id="5LM7"/>
<dbReference type="PDBsum" id="5MS0"/>
<dbReference type="PDBsum" id="6GOV"/>
<dbReference type="PDBsum" id="6TQN"/>
<dbReference type="PDBsum" id="6TQO"/>
<dbReference type="EMDB" id="EMD-3561"/>
<dbReference type="SMR" id="P0A780"/>
<dbReference type="BioGRID" id="4259834">
    <property type="interactions" value="63"/>
</dbReference>
<dbReference type="ComplexPortal" id="CPX-5674">
    <property type="entry name" value="Transcription elongation complex"/>
</dbReference>
<dbReference type="ComplexPortal" id="CPX-5780">
    <property type="entry name" value="lambdaN-dependent processive transcription antitermination complex"/>
</dbReference>
<dbReference type="DIP" id="DIP-48254N"/>
<dbReference type="FunCoup" id="P0A780">
    <property type="interactions" value="458"/>
</dbReference>
<dbReference type="IntAct" id="P0A780">
    <property type="interactions" value="12"/>
</dbReference>
<dbReference type="STRING" id="511145.b0416"/>
<dbReference type="jPOST" id="P0A780"/>
<dbReference type="PaxDb" id="511145-b0416"/>
<dbReference type="EnsemblBacteria" id="AAC73519">
    <property type="protein sequence ID" value="AAC73519"/>
    <property type="gene ID" value="b0416"/>
</dbReference>
<dbReference type="GeneID" id="93777044"/>
<dbReference type="GeneID" id="945054"/>
<dbReference type="KEGG" id="ecj:JW0406"/>
<dbReference type="KEGG" id="eco:b0416"/>
<dbReference type="KEGG" id="ecoc:C3026_02030"/>
<dbReference type="PATRIC" id="fig|1411691.4.peg.1861"/>
<dbReference type="EchoBASE" id="EB0660"/>
<dbReference type="eggNOG" id="COG0781">
    <property type="taxonomic scope" value="Bacteria"/>
</dbReference>
<dbReference type="HOGENOM" id="CLU_087843_4_1_6"/>
<dbReference type="InParanoid" id="P0A780"/>
<dbReference type="OMA" id="DRMPVVD"/>
<dbReference type="OrthoDB" id="9789556at2"/>
<dbReference type="PhylomeDB" id="P0A780"/>
<dbReference type="BioCyc" id="EcoCyc:EG10666-MONOMER"/>
<dbReference type="EvolutionaryTrace" id="P0A780"/>
<dbReference type="PRO" id="PR:P0A780"/>
<dbReference type="Proteomes" id="UP000000625">
    <property type="component" value="Chromosome"/>
</dbReference>
<dbReference type="GO" id="GO:0005829">
    <property type="term" value="C:cytosol"/>
    <property type="evidence" value="ECO:0000314"/>
    <property type="project" value="EcoCyc"/>
</dbReference>
<dbReference type="GO" id="GO:0008023">
    <property type="term" value="C:transcription elongation factor complex"/>
    <property type="evidence" value="ECO:0000303"/>
    <property type="project" value="ComplexPortal"/>
</dbReference>
<dbReference type="GO" id="GO:0003723">
    <property type="term" value="F:RNA binding"/>
    <property type="evidence" value="ECO:0007669"/>
    <property type="project" value="UniProtKB-UniRule"/>
</dbReference>
<dbReference type="GO" id="GO:0006353">
    <property type="term" value="P:DNA-templated transcription termination"/>
    <property type="evidence" value="ECO:0007669"/>
    <property type="project" value="UniProtKB-UniRule"/>
</dbReference>
<dbReference type="GO" id="GO:0032784">
    <property type="term" value="P:regulation of DNA-templated transcription elongation"/>
    <property type="evidence" value="ECO:0000303"/>
    <property type="project" value="ComplexPortal"/>
</dbReference>
<dbReference type="GO" id="GO:0042254">
    <property type="term" value="P:ribosome biogenesis"/>
    <property type="evidence" value="ECO:0007669"/>
    <property type="project" value="UniProtKB-KW"/>
</dbReference>
<dbReference type="GO" id="GO:0031564">
    <property type="term" value="P:transcription antitermination"/>
    <property type="evidence" value="ECO:0000314"/>
    <property type="project" value="ComplexPortal"/>
</dbReference>
<dbReference type="CDD" id="cd00619">
    <property type="entry name" value="Terminator_NusB"/>
    <property type="match status" value="1"/>
</dbReference>
<dbReference type="FunFam" id="1.10.940.10:FF:000001">
    <property type="entry name" value="Transcription antitermination factor NusB"/>
    <property type="match status" value="1"/>
</dbReference>
<dbReference type="Gene3D" id="1.10.940.10">
    <property type="entry name" value="NusB-like"/>
    <property type="match status" value="1"/>
</dbReference>
<dbReference type="HAMAP" id="MF_00073">
    <property type="entry name" value="NusB"/>
    <property type="match status" value="1"/>
</dbReference>
<dbReference type="InterPro" id="IPR035926">
    <property type="entry name" value="NusB-like_sf"/>
</dbReference>
<dbReference type="InterPro" id="IPR011605">
    <property type="entry name" value="NusB_fam"/>
</dbReference>
<dbReference type="InterPro" id="IPR006027">
    <property type="entry name" value="NusB_RsmB_TIM44"/>
</dbReference>
<dbReference type="NCBIfam" id="TIGR01951">
    <property type="entry name" value="nusB"/>
    <property type="match status" value="1"/>
</dbReference>
<dbReference type="PANTHER" id="PTHR11078:SF3">
    <property type="entry name" value="ANTITERMINATION NUSB DOMAIN-CONTAINING PROTEIN"/>
    <property type="match status" value="1"/>
</dbReference>
<dbReference type="PANTHER" id="PTHR11078">
    <property type="entry name" value="N UTILIZATION SUBSTANCE PROTEIN B-RELATED"/>
    <property type="match status" value="1"/>
</dbReference>
<dbReference type="Pfam" id="PF01029">
    <property type="entry name" value="NusB"/>
    <property type="match status" value="1"/>
</dbReference>
<dbReference type="SUPFAM" id="SSF48013">
    <property type="entry name" value="NusB-like"/>
    <property type="match status" value="1"/>
</dbReference>
<reference key="1">
    <citation type="journal article" date="1984" name="Nucleic Acids Res.">
        <title>The nucleotide sequence of the Escherichia coli K12 nusB (groNB) gene.</title>
        <authorList>
            <person name="Swindle J."/>
            <person name="Ajioka J."/>
            <person name="Dawson D."/>
            <person name="Myers R."/>
            <person name="Carroll D."/>
            <person name="Georgopoulos C."/>
        </authorList>
    </citation>
    <scope>NUCLEOTIDE SEQUENCE [GENOMIC DNA]</scope>
    <scope>PROTEIN SEQUENCE OF 1-8</scope>
</reference>
<reference key="2">
    <citation type="journal article" date="1984" name="Nucleic Acids Res.">
        <title>Molecular cloning and nucleotide sequencing of the nusB gene of E. coli.</title>
        <authorList>
            <person name="Ishii S."/>
            <person name="Hatada E."/>
            <person name="Maekawa T."/>
            <person name="Imamoto F."/>
        </authorList>
    </citation>
    <scope>NUCLEOTIDE SEQUENCE [GENOMIC DNA]</scope>
    <scope>PROTEIN SEQUENCE OF 1-11</scope>
</reference>
<reference key="3">
    <citation type="journal article" date="1986" name="Adv. Biophys.">
        <title>Escherichia coli proteins involved in regulation of transcription termination: function, structure, and expression of the nusA and nusB genes.</title>
        <authorList>
            <person name="Imamoto F."/>
            <person name="Nakamura Y."/>
        </authorList>
    </citation>
    <scope>NUCLEOTIDE SEQUENCE [GENOMIC DNA]</scope>
</reference>
<reference key="4">
    <citation type="journal article" date="1992" name="Mol. Gen. Genet.">
        <title>Insertional disruption of the nusB (ssyB) gene leads to cold-sensitive growth of Escherichia coli and suppression of the secY24 mutation.</title>
        <authorList>
            <person name="Taura T."/>
            <person name="Ueguchi C."/>
            <person name="Shiba K."/>
            <person name="Ito K."/>
        </authorList>
    </citation>
    <scope>NUCLEOTIDE SEQUENCE [GENOMIC DNA]</scope>
    <scope>DISRUPTION PHENOTYPE</scope>
    <source>
        <strain>K12</strain>
    </source>
</reference>
<reference key="5">
    <citation type="submission" date="1997-01" db="EMBL/GenBank/DDBJ databases">
        <title>Sequence of minutes 4-25 of Escherichia coli.</title>
        <authorList>
            <person name="Chung E."/>
            <person name="Allen E."/>
            <person name="Araujo R."/>
            <person name="Aparicio A.M."/>
            <person name="Davis K."/>
            <person name="Duncan M."/>
            <person name="Federspiel N."/>
            <person name="Hyman R."/>
            <person name="Kalman S."/>
            <person name="Komp C."/>
            <person name="Kurdi O."/>
            <person name="Lew H."/>
            <person name="Lin D."/>
            <person name="Namath A."/>
            <person name="Oefner P."/>
            <person name="Roberts D."/>
            <person name="Schramm S."/>
            <person name="Davis R.W."/>
        </authorList>
    </citation>
    <scope>NUCLEOTIDE SEQUENCE [LARGE SCALE GENOMIC DNA]</scope>
    <source>
        <strain>K12 / MG1655 / ATCC 47076</strain>
    </source>
</reference>
<reference key="6">
    <citation type="journal article" date="1997" name="Science">
        <title>The complete genome sequence of Escherichia coli K-12.</title>
        <authorList>
            <person name="Blattner F.R."/>
            <person name="Plunkett G. III"/>
            <person name="Bloch C.A."/>
            <person name="Perna N.T."/>
            <person name="Burland V."/>
            <person name="Riley M."/>
            <person name="Collado-Vides J."/>
            <person name="Glasner J.D."/>
            <person name="Rode C.K."/>
            <person name="Mayhew G.F."/>
            <person name="Gregor J."/>
            <person name="Davis N.W."/>
            <person name="Kirkpatrick H.A."/>
            <person name="Goeden M.A."/>
            <person name="Rose D.J."/>
            <person name="Mau B."/>
            <person name="Shao Y."/>
        </authorList>
    </citation>
    <scope>NUCLEOTIDE SEQUENCE [LARGE SCALE GENOMIC DNA]</scope>
    <source>
        <strain>K12 / MG1655 / ATCC 47076</strain>
    </source>
</reference>
<reference key="7">
    <citation type="journal article" date="2006" name="Mol. Syst. Biol.">
        <title>Highly accurate genome sequences of Escherichia coli K-12 strains MG1655 and W3110.</title>
        <authorList>
            <person name="Hayashi K."/>
            <person name="Morooka N."/>
            <person name="Yamamoto Y."/>
            <person name="Fujita K."/>
            <person name="Isono K."/>
            <person name="Choi S."/>
            <person name="Ohtsubo E."/>
            <person name="Baba T."/>
            <person name="Wanner B.L."/>
            <person name="Mori H."/>
            <person name="Horiuchi T."/>
        </authorList>
    </citation>
    <scope>NUCLEOTIDE SEQUENCE [LARGE SCALE GENOMIC DNA]</scope>
    <source>
        <strain>K12 / W3110 / ATCC 27325 / DSM 5911</strain>
    </source>
</reference>
<reference key="8">
    <citation type="journal article" date="1982" name="Mol. Gen. Genet.">
        <title>Involvement of the nusA and nusB gene products in transcription of Escherichia coli tryptophan operon in vitro.</title>
        <authorList>
            <person name="Kuroki K."/>
            <person name="Ishii S."/>
            <person name="Kano Y."/>
            <person name="Miyashita T."/>
            <person name="Nishi K."/>
            <person name="Imamoto F."/>
        </authorList>
    </citation>
    <scope>FUNCTION</scope>
</reference>
<reference key="9">
    <citation type="journal article" date="1992" name="J. Mol. Biol.">
        <title>Direct interaction between two Escherichia coli transcription antitermination factors, NusB and ribosomal protein S10.</title>
        <authorList>
            <person name="Mason S.W."/>
            <person name="Li J."/>
            <person name="Greenblatt J."/>
        </authorList>
    </citation>
    <scope>INTERACTION WITH RIBOSOMAL PROTEIN S10</scope>
</reference>
<reference key="10">
    <citation type="journal article" date="1993" name="Cell">
        <title>Recognition of boxA antiterminator RNA by the E. coli antitermination factors NusB and ribosomal protein S10.</title>
        <authorList>
            <person name="Nodwell J.R."/>
            <person name="Greenblatt J."/>
        </authorList>
    </citation>
    <scope>FUNCTION</scope>
    <scope>RNA-BINDING</scope>
</reference>
<reference key="11">
    <citation type="journal article" date="1997" name="Electrophoresis">
        <title>Escherichia coli proteome analysis using the gene-protein database.</title>
        <authorList>
            <person name="VanBogelen R.A."/>
            <person name="Abshire K.Z."/>
            <person name="Moldover B."/>
            <person name="Olson E.R."/>
            <person name="Neidhardt F.C."/>
        </authorList>
    </citation>
    <scope>IDENTIFICATION BY 2D-GEL</scope>
</reference>
<reference key="12">
    <citation type="journal article" date="1999" name="Mol. Microbiol.">
        <title>Antiterminator-dependent modulation of transcription elongation rates by NusB and NusG.</title>
        <authorList>
            <person name="Zellars M."/>
            <person name="Squires C.L."/>
        </authorList>
    </citation>
    <scope>FUNCTION</scope>
</reference>
<reference key="13">
    <citation type="journal article" date="2002" name="J. Mol. Biol.">
        <title>Transcriptional regulation by antitermination. Interaction of RNA with NusB protein and NusB/NusE protein complex of Escherichia coli.</title>
        <authorList>
            <person name="Luettgen H."/>
            <person name="Robelek R."/>
            <person name="Muehlberger R."/>
            <person name="Diercks T."/>
            <person name="Schuster S.C."/>
            <person name="Koehler P."/>
            <person name="Kessler H."/>
            <person name="Bacher A."/>
            <person name="Richter G."/>
        </authorList>
    </citation>
    <scope>FUNCTION</scope>
    <scope>INTERACTION WITH RIBOSOMAL PROTEIN S10</scope>
</reference>
<reference key="14">
    <citation type="journal article" date="2004" name="J. Bacteriol.">
        <title>In vivo effect of NusB and NusG on rRNA transcription antitermination.</title>
        <authorList>
            <person name="Torres M."/>
            <person name="Balada J.M."/>
            <person name="Zellars M."/>
            <person name="Squires C."/>
            <person name="Squires C.L."/>
        </authorList>
    </citation>
    <scope>FUNCTION</scope>
</reference>
<reference key="15">
    <citation type="journal article" date="2005" name="J. Bacteriol.">
        <title>Transcriptional polarity in rRNA operons of Escherichia coli nusA and nusB mutant strains.</title>
        <authorList>
            <person name="Quan S."/>
            <person name="Zhang N."/>
            <person name="French S."/>
            <person name="Squires C.L."/>
        </authorList>
    </citation>
    <scope>FUNCTION</scope>
</reference>
<reference key="16">
    <citation type="journal article" date="2005" name="J. Biol. Chem.">
        <title>Assembly of an RNA-protein complex. Binding of NusB and NusE (S10) proteins to boxA RNA nucleates the formation of the antitermination complex involved in controlling rRNA transcription in Escherichia coli.</title>
        <authorList>
            <person name="Greive S.J."/>
            <person name="Lins A.F."/>
            <person name="von Hippel P.H."/>
        </authorList>
    </citation>
    <scope>FUNCTION</scope>
    <scope>SUBUNIT</scope>
    <scope>INTERACTION WITH RIBOSOMAL PROTEIN S10</scope>
</reference>
<reference key="17">
    <citation type="journal article" date="1998" name="EMBO J.">
        <title>Solution structure of the antitermination protein NusB of Escherichia coli: a novel all-helical fold for an RNA-binding protein.</title>
        <authorList>
            <person name="Huenges M."/>
            <person name="Rolz C."/>
            <person name="Gschwind R."/>
            <person name="Peteranderl R."/>
            <person name="Berglechner F."/>
            <person name="Richter G."/>
            <person name="Bacher A."/>
            <person name="Kessler H."/>
            <person name="Gemmecker G."/>
        </authorList>
    </citation>
    <scope>STRUCTURE BY NMR</scope>
    <scope>DOMAIN</scope>
</reference>
<reference evidence="20" key="18">
    <citation type="journal article" date="2000" name="Nat. Struct. Biol.">
        <title>The structure of the transcriptional antiterminator NusB from Escherichia coli.</title>
        <authorList>
            <person name="Altieri A.S."/>
            <person name="Mazzulla M.J."/>
            <person name="Horita D.A."/>
            <person name="Coats R.H."/>
            <person name="Wingfield P.T."/>
            <person name="Das A."/>
            <person name="Court D.L."/>
            <person name="Byrd R.A."/>
        </authorList>
    </citation>
    <scope>STRUCTURE BY NMR</scope>
    <scope>SUBUNIT</scope>
</reference>
<reference evidence="21 22" key="19">
    <citation type="journal article" date="2008" name="Mol. Cell">
        <title>Structural and functional analysis of the E. coli NusB-S10 transcription antitermination complex.</title>
        <authorList>
            <person name="Luo X."/>
            <person name="Hsiao H.H."/>
            <person name="Bubunenko M."/>
            <person name="Weber G."/>
            <person name="Court D.L."/>
            <person name="Gottesman M.E."/>
            <person name="Urlaub H."/>
            <person name="Wahl M.C."/>
        </authorList>
    </citation>
    <scope>X-RAY CRYSTALLOGRAPHY (1.30 ANGSTROMS) IN COMPLEX WITH RIBOSOMAL PROTEIN S10</scope>
    <scope>FUNCTION</scope>
</reference>
<reference evidence="23 24" key="20">
    <citation type="journal article" date="2020" name="Mol. Cell">
        <title>Structure-Based Mechanisms of a Molecular RNA Polymerase/Chaperone Machine Required for Ribosome Biosynthesis.</title>
        <authorList>
            <person name="Huang Y.H."/>
            <person name="Hilal T."/>
            <person name="Loll B."/>
            <person name="Buerger J."/>
            <person name="Mielke T."/>
            <person name="Boettcher C."/>
            <person name="Said N."/>
            <person name="Wahl M.C."/>
        </authorList>
    </citation>
    <scope>STRUCTURE BY ELECTRON MICROSCOPY (3.80 ANGSTROMS) OF RRNA TRANSCRIPTION-ELONGATION-ANTITERMINATION COMPLEXES WITH AND WITHOUT S4</scope>
    <scope>FUNCTION</scope>
    <scope>SUBUNIT</scope>
</reference>
<feature type="chain" id="PRO_0000176536" description="Transcription antitermination protein NusB">
    <location>
        <begin position="1"/>
        <end position="139"/>
    </location>
</feature>
<feature type="sequence variant" description="In nusB5; abolishes antitermination.">
    <original>Y</original>
    <variation>D</variation>
    <location>
        <position position="18"/>
    </location>
</feature>
<feature type="sequence conflict" description="In Ref. 1." evidence="19" ref="1">
    <original>T</original>
    <variation>S</variation>
    <location>
        <position position="59"/>
    </location>
</feature>
<feature type="helix" evidence="25">
    <location>
        <begin position="4"/>
        <end position="23"/>
    </location>
</feature>
<feature type="helix" evidence="25">
    <location>
        <begin position="27"/>
        <end position="37"/>
    </location>
</feature>
<feature type="strand" evidence="27">
    <location>
        <begin position="41"/>
        <end position="43"/>
    </location>
</feature>
<feature type="helix" evidence="25">
    <location>
        <begin position="45"/>
        <end position="57"/>
    </location>
</feature>
<feature type="helix" evidence="25">
    <location>
        <begin position="59"/>
        <end position="66"/>
    </location>
</feature>
<feature type="helix" evidence="25">
    <location>
        <begin position="67"/>
        <end position="70"/>
    </location>
</feature>
<feature type="helix" evidence="26">
    <location>
        <begin position="74"/>
        <end position="76"/>
    </location>
</feature>
<feature type="helix" evidence="25">
    <location>
        <begin position="79"/>
        <end position="94"/>
    </location>
</feature>
<feature type="helix" evidence="25">
    <location>
        <begin position="100"/>
        <end position="114"/>
    </location>
</feature>
<feature type="strand" evidence="27">
    <location>
        <begin position="116"/>
        <end position="118"/>
    </location>
</feature>
<feature type="helix" evidence="25">
    <location>
        <begin position="119"/>
        <end position="134"/>
    </location>
</feature>
<evidence type="ECO:0000255" key="1">
    <source>
        <dbReference type="HAMAP-Rule" id="MF_00073"/>
    </source>
</evidence>
<evidence type="ECO:0000269" key="2">
    <source>
    </source>
</evidence>
<evidence type="ECO:0000269" key="3">
    <source>
    </source>
</evidence>
<evidence type="ECO:0000269" key="4">
    <source>
    </source>
</evidence>
<evidence type="ECO:0000269" key="5">
    <source>
    </source>
</evidence>
<evidence type="ECO:0000269" key="6">
    <source>
    </source>
</evidence>
<evidence type="ECO:0000269" key="7">
    <source>
    </source>
</evidence>
<evidence type="ECO:0000269" key="8">
    <source>
    </source>
</evidence>
<evidence type="ECO:0000269" key="9">
    <source>
    </source>
</evidence>
<evidence type="ECO:0000269" key="10">
    <source>
    </source>
</evidence>
<evidence type="ECO:0000269" key="11">
    <source>
    </source>
</evidence>
<evidence type="ECO:0000269" key="12">
    <source>
    </source>
</evidence>
<evidence type="ECO:0000269" key="13">
    <source>
    </source>
</evidence>
<evidence type="ECO:0000269" key="14">
    <source>
    </source>
</evidence>
<evidence type="ECO:0000303" key="15">
    <source>
    </source>
</evidence>
<evidence type="ECO:0000303" key="16">
    <source>
    </source>
</evidence>
<evidence type="ECO:0000303" key="17">
    <source>
    </source>
</evidence>
<evidence type="ECO:0000303" key="18">
    <source>
    </source>
</evidence>
<evidence type="ECO:0000305" key="19"/>
<evidence type="ECO:0007744" key="20">
    <source>
        <dbReference type="PDB" id="1EY1"/>
    </source>
</evidence>
<evidence type="ECO:0007744" key="21">
    <source>
        <dbReference type="PDB" id="3D3B"/>
    </source>
</evidence>
<evidence type="ECO:0007744" key="22">
    <source>
        <dbReference type="PDB" id="3D3C"/>
    </source>
</evidence>
<evidence type="ECO:0007744" key="23">
    <source>
        <dbReference type="PDB" id="6TQN"/>
    </source>
</evidence>
<evidence type="ECO:0007744" key="24">
    <source>
        <dbReference type="PDB" id="6TQO"/>
    </source>
</evidence>
<evidence type="ECO:0007829" key="25">
    <source>
        <dbReference type="PDB" id="3D3B"/>
    </source>
</evidence>
<evidence type="ECO:0007829" key="26">
    <source>
        <dbReference type="PDB" id="3IMQ"/>
    </source>
</evidence>
<evidence type="ECO:0007829" key="27">
    <source>
        <dbReference type="PDB" id="5LM7"/>
    </source>
</evidence>
<sequence>MKPAARRRARECAVQALYSWQLSQNDIADVEYQFLAEQDVKDVDVLYFRELLAGVATNTAYLDGLMKPYLSRLLEELGQVEKAVLRIALYELSKRSDVPYKVAINEAIELAKSFGAEDSHKFVNGVLDKAAPVIRPNKK</sequence>